<protein>
    <recommendedName>
        <fullName evidence="1">tRNA (guanine-N(1)-)-methyltransferase</fullName>
        <ecNumber evidence="1">2.1.1.228</ecNumber>
    </recommendedName>
    <alternativeName>
        <fullName evidence="1">M1G-methyltransferase</fullName>
    </alternativeName>
    <alternativeName>
        <fullName evidence="1">tRNA [GM37] methyltransferase</fullName>
    </alternativeName>
</protein>
<evidence type="ECO:0000255" key="1">
    <source>
        <dbReference type="HAMAP-Rule" id="MF_00605"/>
    </source>
</evidence>
<evidence type="ECO:0000256" key="2">
    <source>
        <dbReference type="SAM" id="MobiDB-lite"/>
    </source>
</evidence>
<accession>Q2J6Z9</accession>
<keyword id="KW-0963">Cytoplasm</keyword>
<keyword id="KW-0489">Methyltransferase</keyword>
<keyword id="KW-1185">Reference proteome</keyword>
<keyword id="KW-0949">S-adenosyl-L-methionine</keyword>
<keyword id="KW-0808">Transferase</keyword>
<keyword id="KW-0819">tRNA processing</keyword>
<feature type="chain" id="PRO_0000257422" description="tRNA (guanine-N(1)-)-methyltransferase">
    <location>
        <begin position="1"/>
        <end position="270"/>
    </location>
</feature>
<feature type="region of interest" description="Disordered" evidence="2">
    <location>
        <begin position="251"/>
        <end position="270"/>
    </location>
</feature>
<feature type="compositionally biased region" description="Basic and acidic residues" evidence="2">
    <location>
        <begin position="260"/>
        <end position="270"/>
    </location>
</feature>
<feature type="binding site" evidence="1">
    <location>
        <position position="113"/>
    </location>
    <ligand>
        <name>S-adenosyl-L-methionine</name>
        <dbReference type="ChEBI" id="CHEBI:59789"/>
    </ligand>
</feature>
<feature type="binding site" evidence="1">
    <location>
        <begin position="133"/>
        <end position="138"/>
    </location>
    <ligand>
        <name>S-adenosyl-L-methionine</name>
        <dbReference type="ChEBI" id="CHEBI:59789"/>
    </ligand>
</feature>
<dbReference type="EC" id="2.1.1.228" evidence="1"/>
<dbReference type="EMBL" id="CP000249">
    <property type="protein sequence ID" value="ABD12943.1"/>
    <property type="molecule type" value="Genomic_DNA"/>
</dbReference>
<dbReference type="RefSeq" id="WP_011437967.1">
    <property type="nucleotide sequence ID" value="NZ_JENI01000005.1"/>
</dbReference>
<dbReference type="SMR" id="Q2J6Z9"/>
<dbReference type="STRING" id="106370.Francci3_3591"/>
<dbReference type="KEGG" id="fra:Francci3_3591"/>
<dbReference type="eggNOG" id="COG0336">
    <property type="taxonomic scope" value="Bacteria"/>
</dbReference>
<dbReference type="HOGENOM" id="CLU_047363_0_1_11"/>
<dbReference type="OrthoDB" id="9807416at2"/>
<dbReference type="PhylomeDB" id="Q2J6Z9"/>
<dbReference type="Proteomes" id="UP000001937">
    <property type="component" value="Chromosome"/>
</dbReference>
<dbReference type="GO" id="GO:0005829">
    <property type="term" value="C:cytosol"/>
    <property type="evidence" value="ECO:0007669"/>
    <property type="project" value="TreeGrafter"/>
</dbReference>
<dbReference type="GO" id="GO:0052906">
    <property type="term" value="F:tRNA (guanine(37)-N1)-methyltransferase activity"/>
    <property type="evidence" value="ECO:0007669"/>
    <property type="project" value="UniProtKB-UniRule"/>
</dbReference>
<dbReference type="GO" id="GO:0002939">
    <property type="term" value="P:tRNA N1-guanine methylation"/>
    <property type="evidence" value="ECO:0007669"/>
    <property type="project" value="TreeGrafter"/>
</dbReference>
<dbReference type="CDD" id="cd18080">
    <property type="entry name" value="TrmD-like"/>
    <property type="match status" value="1"/>
</dbReference>
<dbReference type="FunFam" id="1.10.1270.20:FF:000001">
    <property type="entry name" value="tRNA (guanine-N(1)-)-methyltransferase"/>
    <property type="match status" value="1"/>
</dbReference>
<dbReference type="FunFam" id="3.40.1280.10:FF:000001">
    <property type="entry name" value="tRNA (guanine-N(1)-)-methyltransferase"/>
    <property type="match status" value="1"/>
</dbReference>
<dbReference type="Gene3D" id="3.40.1280.10">
    <property type="match status" value="1"/>
</dbReference>
<dbReference type="Gene3D" id="1.10.1270.20">
    <property type="entry name" value="tRNA(m1g37)methyltransferase, domain 2"/>
    <property type="match status" value="1"/>
</dbReference>
<dbReference type="HAMAP" id="MF_00605">
    <property type="entry name" value="TrmD"/>
    <property type="match status" value="1"/>
</dbReference>
<dbReference type="InterPro" id="IPR029028">
    <property type="entry name" value="Alpha/beta_knot_MTases"/>
</dbReference>
<dbReference type="InterPro" id="IPR023148">
    <property type="entry name" value="tRNA_m1G_MeTrfase_C_sf"/>
</dbReference>
<dbReference type="InterPro" id="IPR002649">
    <property type="entry name" value="tRNA_m1G_MeTrfase_TrmD"/>
</dbReference>
<dbReference type="InterPro" id="IPR029026">
    <property type="entry name" value="tRNA_m1G_MTases_N"/>
</dbReference>
<dbReference type="InterPro" id="IPR016009">
    <property type="entry name" value="tRNA_MeTrfase_TRMD/TRM10"/>
</dbReference>
<dbReference type="NCBIfam" id="NF000648">
    <property type="entry name" value="PRK00026.1"/>
    <property type="match status" value="1"/>
</dbReference>
<dbReference type="NCBIfam" id="TIGR00088">
    <property type="entry name" value="trmD"/>
    <property type="match status" value="1"/>
</dbReference>
<dbReference type="PANTHER" id="PTHR46417">
    <property type="entry name" value="TRNA (GUANINE-N(1)-)-METHYLTRANSFERASE"/>
    <property type="match status" value="1"/>
</dbReference>
<dbReference type="PANTHER" id="PTHR46417:SF1">
    <property type="entry name" value="TRNA (GUANINE-N(1)-)-METHYLTRANSFERASE"/>
    <property type="match status" value="1"/>
</dbReference>
<dbReference type="Pfam" id="PF01746">
    <property type="entry name" value="tRNA_m1G_MT"/>
    <property type="match status" value="1"/>
</dbReference>
<dbReference type="PIRSF" id="PIRSF000386">
    <property type="entry name" value="tRNA_mtase"/>
    <property type="match status" value="1"/>
</dbReference>
<dbReference type="SUPFAM" id="SSF75217">
    <property type="entry name" value="alpha/beta knot"/>
    <property type="match status" value="1"/>
</dbReference>
<proteinExistence type="inferred from homology"/>
<organism>
    <name type="scientific">Frankia casuarinae (strain DSM 45818 / CECT 9043 / HFP020203 / CcI3)</name>
    <dbReference type="NCBI Taxonomy" id="106370"/>
    <lineage>
        <taxon>Bacteria</taxon>
        <taxon>Bacillati</taxon>
        <taxon>Actinomycetota</taxon>
        <taxon>Actinomycetes</taxon>
        <taxon>Frankiales</taxon>
        <taxon>Frankiaceae</taxon>
        <taxon>Frankia</taxon>
    </lineage>
</organism>
<gene>
    <name evidence="1" type="primary">trmD</name>
    <name type="ordered locus">Francci3_3591</name>
</gene>
<reference key="1">
    <citation type="journal article" date="2007" name="Genome Res.">
        <title>Genome characteristics of facultatively symbiotic Frankia sp. strains reflect host range and host plant biogeography.</title>
        <authorList>
            <person name="Normand P."/>
            <person name="Lapierre P."/>
            <person name="Tisa L.S."/>
            <person name="Gogarten J.P."/>
            <person name="Alloisio N."/>
            <person name="Bagnarol E."/>
            <person name="Bassi C.A."/>
            <person name="Berry A.M."/>
            <person name="Bickhart D.M."/>
            <person name="Choisne N."/>
            <person name="Couloux A."/>
            <person name="Cournoyer B."/>
            <person name="Cruveiller S."/>
            <person name="Daubin V."/>
            <person name="Demange N."/>
            <person name="Francino M.P."/>
            <person name="Goltsman E."/>
            <person name="Huang Y."/>
            <person name="Kopp O.R."/>
            <person name="Labarre L."/>
            <person name="Lapidus A."/>
            <person name="Lavire C."/>
            <person name="Marechal J."/>
            <person name="Martinez M."/>
            <person name="Mastronunzio J.E."/>
            <person name="Mullin B.C."/>
            <person name="Niemann J."/>
            <person name="Pujic P."/>
            <person name="Rawnsley T."/>
            <person name="Rouy Z."/>
            <person name="Schenowitz C."/>
            <person name="Sellstedt A."/>
            <person name="Tavares F."/>
            <person name="Tomkins J.P."/>
            <person name="Vallenet D."/>
            <person name="Valverde C."/>
            <person name="Wall L.G."/>
            <person name="Wang Y."/>
            <person name="Medigue C."/>
            <person name="Benson D.R."/>
        </authorList>
    </citation>
    <scope>NUCLEOTIDE SEQUENCE [LARGE SCALE GENOMIC DNA]</scope>
    <source>
        <strain>DSM 45818 / CECT 9043 / HFP020203 / CcI3</strain>
    </source>
</reference>
<comment type="function">
    <text evidence="1">Specifically methylates guanosine-37 in various tRNAs.</text>
</comment>
<comment type="catalytic activity">
    <reaction evidence="1">
        <text>guanosine(37) in tRNA + S-adenosyl-L-methionine = N(1)-methylguanosine(37) in tRNA + S-adenosyl-L-homocysteine + H(+)</text>
        <dbReference type="Rhea" id="RHEA:36899"/>
        <dbReference type="Rhea" id="RHEA-COMP:10145"/>
        <dbReference type="Rhea" id="RHEA-COMP:10147"/>
        <dbReference type="ChEBI" id="CHEBI:15378"/>
        <dbReference type="ChEBI" id="CHEBI:57856"/>
        <dbReference type="ChEBI" id="CHEBI:59789"/>
        <dbReference type="ChEBI" id="CHEBI:73542"/>
        <dbReference type="ChEBI" id="CHEBI:74269"/>
        <dbReference type="EC" id="2.1.1.228"/>
    </reaction>
</comment>
<comment type="subunit">
    <text evidence="1">Homodimer.</text>
</comment>
<comment type="subcellular location">
    <subcellularLocation>
        <location evidence="1">Cytoplasm</location>
    </subcellularLocation>
</comment>
<comment type="similarity">
    <text evidence="1">Belongs to the RNA methyltransferase TrmD family.</text>
</comment>
<sequence length="270" mass="29535">MRADIVTIFPAYLEPLRLSLVGRAQEHGTLQIHTHDLRMWTTDVHRTVDDAPYGGGPGMVMRPEPWDAALSQITARVADSRPRVVVPTPAGTPFTQRHAEELAREPWLVFCCGRYEGIDARVIETWADDEISIGDYVLAGGEAATLVILEAVTRLLPGVLGNSASVADDSFSDGLLEGPVYTRPPVWRGTEVPPVLRSGDHEAIARWRRSQALRRTLLRRPDLLEHREFAEADRVVLAAAAAEAAGRMLPAPTEGTGLIHHRDVEGPGEG</sequence>
<name>TRMD_FRACC</name>